<accession>Q8Z421</accession>
<protein>
    <recommendedName>
        <fullName>Amino-acid acetyltransferase</fullName>
        <ecNumber>2.3.1.1</ecNumber>
    </recommendedName>
    <alternativeName>
        <fullName>N-acetylglutamate synthase</fullName>
        <shortName>AGS</shortName>
        <shortName>NAGS</shortName>
    </alternativeName>
</protein>
<proteinExistence type="inferred from homology"/>
<feature type="chain" id="PRO_0000186804" description="Amino-acid acetyltransferase">
    <location>
        <begin position="1"/>
        <end position="443"/>
    </location>
</feature>
<feature type="domain" description="N-acetyltransferase">
    <location>
        <begin position="296"/>
        <end position="443"/>
    </location>
</feature>
<gene>
    <name type="primary">argA</name>
    <name type="ordered locus">STY3130</name>
    <name type="ordered locus">t2900</name>
</gene>
<organism>
    <name type="scientific">Salmonella typhi</name>
    <dbReference type="NCBI Taxonomy" id="90370"/>
    <lineage>
        <taxon>Bacteria</taxon>
        <taxon>Pseudomonadati</taxon>
        <taxon>Pseudomonadota</taxon>
        <taxon>Gammaproteobacteria</taxon>
        <taxon>Enterobacterales</taxon>
        <taxon>Enterobacteriaceae</taxon>
        <taxon>Salmonella</taxon>
    </lineage>
</organism>
<name>ARGA_SALTI</name>
<dbReference type="EC" id="2.3.1.1"/>
<dbReference type="EMBL" id="AL513382">
    <property type="protein sequence ID" value="CAD02816.1"/>
    <property type="molecule type" value="Genomic_DNA"/>
</dbReference>
<dbReference type="EMBL" id="AE014613">
    <property type="protein sequence ID" value="AAO70454.1"/>
    <property type="molecule type" value="Genomic_DNA"/>
</dbReference>
<dbReference type="RefSeq" id="NP_457385.1">
    <property type="nucleotide sequence ID" value="NC_003198.1"/>
</dbReference>
<dbReference type="RefSeq" id="WP_000588970.1">
    <property type="nucleotide sequence ID" value="NZ_WSUR01000005.1"/>
</dbReference>
<dbReference type="SMR" id="Q8Z421"/>
<dbReference type="STRING" id="220341.gene:17587016"/>
<dbReference type="KEGG" id="stt:t2900"/>
<dbReference type="KEGG" id="sty:STY3130"/>
<dbReference type="PATRIC" id="fig|220341.7.peg.3185"/>
<dbReference type="eggNOG" id="COG0548">
    <property type="taxonomic scope" value="Bacteria"/>
</dbReference>
<dbReference type="eggNOG" id="COG1246">
    <property type="taxonomic scope" value="Bacteria"/>
</dbReference>
<dbReference type="HOGENOM" id="CLU_024773_0_0_6"/>
<dbReference type="OMA" id="KRKYNWD"/>
<dbReference type="OrthoDB" id="9802238at2"/>
<dbReference type="UniPathway" id="UPA00068">
    <property type="reaction ID" value="UER00106"/>
</dbReference>
<dbReference type="Proteomes" id="UP000000541">
    <property type="component" value="Chromosome"/>
</dbReference>
<dbReference type="Proteomes" id="UP000002670">
    <property type="component" value="Chromosome"/>
</dbReference>
<dbReference type="GO" id="GO:0005737">
    <property type="term" value="C:cytoplasm"/>
    <property type="evidence" value="ECO:0007669"/>
    <property type="project" value="UniProtKB-SubCell"/>
</dbReference>
<dbReference type="GO" id="GO:0004042">
    <property type="term" value="F:L-glutamate N-acetyltransferase activity"/>
    <property type="evidence" value="ECO:0007669"/>
    <property type="project" value="UniProtKB-UniRule"/>
</dbReference>
<dbReference type="GO" id="GO:0006526">
    <property type="term" value="P:L-arginine biosynthetic process"/>
    <property type="evidence" value="ECO:0007669"/>
    <property type="project" value="UniProtKB-UniRule"/>
</dbReference>
<dbReference type="CDD" id="cd04237">
    <property type="entry name" value="AAK_NAGS-ABP"/>
    <property type="match status" value="1"/>
</dbReference>
<dbReference type="CDD" id="cd04301">
    <property type="entry name" value="NAT_SF"/>
    <property type="match status" value="1"/>
</dbReference>
<dbReference type="FunFam" id="3.40.1160.10:FF:000005">
    <property type="entry name" value="Amino-acid acetyltransferase"/>
    <property type="match status" value="1"/>
</dbReference>
<dbReference type="FunFam" id="3.40.630.30:FF:000009">
    <property type="entry name" value="Amino-acid acetyltransferase"/>
    <property type="match status" value="1"/>
</dbReference>
<dbReference type="Gene3D" id="3.40.630.30">
    <property type="match status" value="1"/>
</dbReference>
<dbReference type="Gene3D" id="3.40.1160.10">
    <property type="entry name" value="Acetylglutamate kinase-like"/>
    <property type="match status" value="1"/>
</dbReference>
<dbReference type="HAMAP" id="MF_01105">
    <property type="entry name" value="N_acetyl_glu_synth"/>
    <property type="match status" value="1"/>
</dbReference>
<dbReference type="InterPro" id="IPR036393">
    <property type="entry name" value="AceGlu_kinase-like_sf"/>
</dbReference>
<dbReference type="InterPro" id="IPR016181">
    <property type="entry name" value="Acyl_CoA_acyltransferase"/>
</dbReference>
<dbReference type="InterPro" id="IPR001048">
    <property type="entry name" value="Asp/Glu/Uridylate_kinase"/>
</dbReference>
<dbReference type="InterPro" id="IPR000182">
    <property type="entry name" value="GNAT_dom"/>
</dbReference>
<dbReference type="InterPro" id="IPR033719">
    <property type="entry name" value="NAGS_kin"/>
</dbReference>
<dbReference type="InterPro" id="IPR010167">
    <property type="entry name" value="NH2A_AcTrfase"/>
</dbReference>
<dbReference type="NCBIfam" id="TIGR01890">
    <property type="entry name" value="N-Ac-Glu-synth"/>
    <property type="match status" value="1"/>
</dbReference>
<dbReference type="NCBIfam" id="NF003641">
    <property type="entry name" value="PRK05279.1"/>
    <property type="match status" value="1"/>
</dbReference>
<dbReference type="PANTHER" id="PTHR30602">
    <property type="entry name" value="AMINO-ACID ACETYLTRANSFERASE"/>
    <property type="match status" value="1"/>
</dbReference>
<dbReference type="PANTHER" id="PTHR30602:SF12">
    <property type="entry name" value="AMINO-ACID ACETYLTRANSFERASE NAGS1, CHLOROPLASTIC-RELATED"/>
    <property type="match status" value="1"/>
</dbReference>
<dbReference type="Pfam" id="PF00696">
    <property type="entry name" value="AA_kinase"/>
    <property type="match status" value="1"/>
</dbReference>
<dbReference type="Pfam" id="PF00583">
    <property type="entry name" value="Acetyltransf_1"/>
    <property type="match status" value="1"/>
</dbReference>
<dbReference type="PIRSF" id="PIRSF000423">
    <property type="entry name" value="ArgA"/>
    <property type="match status" value="1"/>
</dbReference>
<dbReference type="SUPFAM" id="SSF55729">
    <property type="entry name" value="Acyl-CoA N-acyltransferases (Nat)"/>
    <property type="match status" value="1"/>
</dbReference>
<dbReference type="SUPFAM" id="SSF53633">
    <property type="entry name" value="Carbamate kinase-like"/>
    <property type="match status" value="1"/>
</dbReference>
<dbReference type="PROSITE" id="PS51186">
    <property type="entry name" value="GNAT"/>
    <property type="match status" value="1"/>
</dbReference>
<comment type="catalytic activity">
    <reaction>
        <text>L-glutamate + acetyl-CoA = N-acetyl-L-glutamate + CoA + H(+)</text>
        <dbReference type="Rhea" id="RHEA:24292"/>
        <dbReference type="ChEBI" id="CHEBI:15378"/>
        <dbReference type="ChEBI" id="CHEBI:29985"/>
        <dbReference type="ChEBI" id="CHEBI:44337"/>
        <dbReference type="ChEBI" id="CHEBI:57287"/>
        <dbReference type="ChEBI" id="CHEBI:57288"/>
        <dbReference type="EC" id="2.3.1.1"/>
    </reaction>
</comment>
<comment type="pathway">
    <text>Amino-acid biosynthesis; L-arginine biosynthesis; N(2)-acetyl-L-ornithine from L-glutamate: step 1/4.</text>
</comment>
<comment type="subunit">
    <text evidence="1">Homohexamer.</text>
</comment>
<comment type="subcellular location">
    <subcellularLocation>
        <location evidence="1">Cytoplasm</location>
    </subcellularLocation>
</comment>
<comment type="similarity">
    <text evidence="2">Belongs to the acetyltransferase family. ArgA subfamily.</text>
</comment>
<reference key="1">
    <citation type="journal article" date="2001" name="Nature">
        <title>Complete genome sequence of a multiple drug resistant Salmonella enterica serovar Typhi CT18.</title>
        <authorList>
            <person name="Parkhill J."/>
            <person name="Dougan G."/>
            <person name="James K.D."/>
            <person name="Thomson N.R."/>
            <person name="Pickard D."/>
            <person name="Wain J."/>
            <person name="Churcher C.M."/>
            <person name="Mungall K.L."/>
            <person name="Bentley S.D."/>
            <person name="Holden M.T.G."/>
            <person name="Sebaihia M."/>
            <person name="Baker S."/>
            <person name="Basham D."/>
            <person name="Brooks K."/>
            <person name="Chillingworth T."/>
            <person name="Connerton P."/>
            <person name="Cronin A."/>
            <person name="Davis P."/>
            <person name="Davies R.M."/>
            <person name="Dowd L."/>
            <person name="White N."/>
            <person name="Farrar J."/>
            <person name="Feltwell T."/>
            <person name="Hamlin N."/>
            <person name="Haque A."/>
            <person name="Hien T.T."/>
            <person name="Holroyd S."/>
            <person name="Jagels K."/>
            <person name="Krogh A."/>
            <person name="Larsen T.S."/>
            <person name="Leather S."/>
            <person name="Moule S."/>
            <person name="O'Gaora P."/>
            <person name="Parry C."/>
            <person name="Quail M.A."/>
            <person name="Rutherford K.M."/>
            <person name="Simmonds M."/>
            <person name="Skelton J."/>
            <person name="Stevens K."/>
            <person name="Whitehead S."/>
            <person name="Barrell B.G."/>
        </authorList>
    </citation>
    <scope>NUCLEOTIDE SEQUENCE [LARGE SCALE GENOMIC DNA]</scope>
    <source>
        <strain>CT18</strain>
    </source>
</reference>
<reference key="2">
    <citation type="journal article" date="2003" name="J. Bacteriol.">
        <title>Comparative genomics of Salmonella enterica serovar Typhi strains Ty2 and CT18.</title>
        <authorList>
            <person name="Deng W."/>
            <person name="Liou S.-R."/>
            <person name="Plunkett G. III"/>
            <person name="Mayhew G.F."/>
            <person name="Rose D.J."/>
            <person name="Burland V."/>
            <person name="Kodoyianni V."/>
            <person name="Schwartz D.C."/>
            <person name="Blattner F.R."/>
        </authorList>
    </citation>
    <scope>NUCLEOTIDE SEQUENCE [LARGE SCALE GENOMIC DNA]</scope>
    <source>
        <strain>ATCC 700931 / Ty2</strain>
    </source>
</reference>
<evidence type="ECO:0000250" key="1"/>
<evidence type="ECO:0000305" key="2"/>
<sequence length="443" mass="49308">MIKERKTELVEGFRHSVPYINTHRGKTFVIMLGGEAIEHDNFSSIVSDIGLLHSLGIRLVVVYGARPQIDANLAAHHHEPIYHKNTRVTDAKTLELVKQAAGLLQLDITARLSMSLNNTPLQGAHINVVSGNFTIAQPLGVDDGVDYCHSGRIRRIDEDAINRQLDNGAIVLMGPVAVSVTGESFNLTSEEIATQLAVKLKAEKMIGFCSSQGVTNSEGGIISELFPNEAQARVEELEAQGDYNSGTVRFLRGAVKACRSGVRRCHLISYQEDGSLLQELFSRDGIGTQIVMESAEQIRRATINDIGGILELIRPLEQQGILVRRSREQLEMEIDKFTIIQRDNMTIACAALYPFVEEKIGEMACVAVHPDYRSSSRGEVLLERVAAQARQMGLRKLFVLTTRSIHWFQERGFTPVDIELLPESKKKMYNYQRRSKVLMADLG</sequence>
<keyword id="KW-0012">Acyltransferase</keyword>
<keyword id="KW-0028">Amino-acid biosynthesis</keyword>
<keyword id="KW-0055">Arginine biosynthesis</keyword>
<keyword id="KW-0963">Cytoplasm</keyword>
<keyword id="KW-0808">Transferase</keyword>